<accession>Q2FEW1</accession>
<dbReference type="EC" id="2.7.7.-"/>
<dbReference type="EMBL" id="CP000255">
    <property type="protein sequence ID" value="ABD22464.1"/>
    <property type="molecule type" value="Genomic_DNA"/>
</dbReference>
<dbReference type="RefSeq" id="WP_000884739.1">
    <property type="nucleotide sequence ID" value="NZ_CP027476.1"/>
</dbReference>
<dbReference type="SMR" id="Q2FEW1"/>
<dbReference type="KEGG" id="saa:SAUSA300_2130"/>
<dbReference type="HOGENOM" id="CLU_025603_1_2_9"/>
<dbReference type="OMA" id="YFQVDNP"/>
<dbReference type="Proteomes" id="UP000001939">
    <property type="component" value="Chromosome"/>
</dbReference>
<dbReference type="GO" id="GO:0070569">
    <property type="term" value="F:uridylyltransferase activity"/>
    <property type="evidence" value="ECO:0007669"/>
    <property type="project" value="InterPro"/>
</dbReference>
<dbReference type="CDD" id="cd04193">
    <property type="entry name" value="UDPGlcNAc_PPase"/>
    <property type="match status" value="1"/>
</dbReference>
<dbReference type="Gene3D" id="3.90.550.10">
    <property type="entry name" value="Spore Coat Polysaccharide Biosynthesis Protein SpsA, Chain A"/>
    <property type="match status" value="1"/>
</dbReference>
<dbReference type="InterPro" id="IPR029044">
    <property type="entry name" value="Nucleotide-diphossugar_trans"/>
</dbReference>
<dbReference type="InterPro" id="IPR039741">
    <property type="entry name" value="UDP-sugar_pyrophosphorylase"/>
</dbReference>
<dbReference type="InterPro" id="IPR002618">
    <property type="entry name" value="UDPGP_fam"/>
</dbReference>
<dbReference type="PANTHER" id="PTHR11952:SF2">
    <property type="entry name" value="LD24639P"/>
    <property type="match status" value="1"/>
</dbReference>
<dbReference type="PANTHER" id="PTHR11952">
    <property type="entry name" value="UDP- GLUCOSE PYROPHOSPHORYLASE"/>
    <property type="match status" value="1"/>
</dbReference>
<dbReference type="Pfam" id="PF01704">
    <property type="entry name" value="UDPGP"/>
    <property type="match status" value="1"/>
</dbReference>
<dbReference type="SUPFAM" id="SSF53448">
    <property type="entry name" value="Nucleotide-diphospho-sugar transferases"/>
    <property type="match status" value="1"/>
</dbReference>
<protein>
    <recommendedName>
        <fullName>Probable uridylyltransferase SAUSA300_2130</fullName>
        <ecNumber>2.7.7.-</ecNumber>
    </recommendedName>
</protein>
<keyword id="KW-0548">Nucleotidyltransferase</keyword>
<keyword id="KW-0808">Transferase</keyword>
<feature type="chain" id="PRO_0000271306" description="Probable uridylyltransferase SAUSA300_2130">
    <location>
        <begin position="1"/>
        <end position="395"/>
    </location>
</feature>
<feature type="binding site" evidence="1">
    <location>
        <begin position="99"/>
        <end position="102"/>
    </location>
    <ligand>
        <name>UTP</name>
        <dbReference type="ChEBI" id="CHEBI:46398"/>
    </ligand>
</feature>
<feature type="binding site" evidence="1">
    <location>
        <position position="113"/>
    </location>
    <ligand>
        <name>UTP</name>
        <dbReference type="ChEBI" id="CHEBI:46398"/>
    </ligand>
</feature>
<feature type="binding site" evidence="1">
    <location>
        <position position="178"/>
    </location>
    <ligand>
        <name>UTP</name>
        <dbReference type="ChEBI" id="CHEBI:46398"/>
    </ligand>
</feature>
<feature type="binding site" evidence="1">
    <location>
        <position position="204"/>
    </location>
    <ligand>
        <name>UTP</name>
        <dbReference type="ChEBI" id="CHEBI:46398"/>
    </ligand>
</feature>
<feature type="binding site" evidence="1">
    <location>
        <position position="235"/>
    </location>
    <ligand>
        <name>UTP</name>
        <dbReference type="ChEBI" id="CHEBI:46398"/>
    </ligand>
</feature>
<feature type="binding site" evidence="1">
    <location>
        <position position="344"/>
    </location>
    <ligand>
        <name>UTP</name>
        <dbReference type="ChEBI" id="CHEBI:46398"/>
    </ligand>
</feature>
<gene>
    <name type="ordered locus">SAUSA300_2130</name>
</gene>
<sequence length="395" mass="44894">MLDKNQLAKYKQDHLCEYEKIMSNNEKEALEEKVASLDLDFIAKLYNDLYINKKTIDDVSAVSEVKYDIKSQMSDDEIKRLEEQGLQAIKEGQFAVLLMAGGQGTRLGYKGPKGSFEIEGVSLFELQANQLKTLNHQSGHTIQWYIMTSDINHEETLAYFEAHSYFGYDQEAIHFFKQDNIVALSEEGKLILNQQGRIMETPNGNGGVFKSLDKAGYLEEMSNNGVKYIFLNNIDNVLVRVLDPLFAGFTVEHDYDITSKTIQPKPGESVGRLVNVDCKDTVLEYSELDPEVANQFNNANIGIHAFKLGFILNAVNRELPYHLAIKNLKQLDENFGVIEQPTLKFELFYFDIFTYGTSFVTLQVPREEEFSPLKNKEGKDSVATATEDLRRMGLI</sequence>
<reference key="1">
    <citation type="journal article" date="2006" name="Lancet">
        <title>Complete genome sequence of USA300, an epidemic clone of community-acquired meticillin-resistant Staphylococcus aureus.</title>
        <authorList>
            <person name="Diep B.A."/>
            <person name="Gill S.R."/>
            <person name="Chang R.F."/>
            <person name="Phan T.H."/>
            <person name="Chen J.H."/>
            <person name="Davidson M.G."/>
            <person name="Lin F."/>
            <person name="Lin J."/>
            <person name="Carleton H.A."/>
            <person name="Mongodin E.F."/>
            <person name="Sensabaugh G.F."/>
            <person name="Perdreau-Remington F."/>
        </authorList>
    </citation>
    <scope>NUCLEOTIDE SEQUENCE [LARGE SCALE GENOMIC DNA]</scope>
    <source>
        <strain>USA300</strain>
    </source>
</reference>
<name>URTF_STAA3</name>
<organism>
    <name type="scientific">Staphylococcus aureus (strain USA300)</name>
    <dbReference type="NCBI Taxonomy" id="367830"/>
    <lineage>
        <taxon>Bacteria</taxon>
        <taxon>Bacillati</taxon>
        <taxon>Bacillota</taxon>
        <taxon>Bacilli</taxon>
        <taxon>Bacillales</taxon>
        <taxon>Staphylococcaceae</taxon>
        <taxon>Staphylococcus</taxon>
    </lineage>
</organism>
<evidence type="ECO:0000250" key="1">
    <source>
        <dbReference type="UniProtKB" id="Q9M9P3"/>
    </source>
</evidence>
<evidence type="ECO:0000305" key="2"/>
<comment type="similarity">
    <text evidence="2">Belongs to the UDPGP type 1 family.</text>
</comment>
<proteinExistence type="inferred from homology"/>